<accession>D5VSX2</accession>
<protein>
    <recommendedName>
        <fullName evidence="1">2-phospho-L-lactate guanylyltransferase</fullName>
        <shortName evidence="1">LP guanylyltransferase</shortName>
        <ecNumber evidence="1">2.7.7.68</ecNumber>
    </recommendedName>
</protein>
<keyword id="KW-0342">GTP-binding</keyword>
<keyword id="KW-0547">Nucleotide-binding</keyword>
<keyword id="KW-0548">Nucleotidyltransferase</keyword>
<keyword id="KW-0808">Transferase</keyword>
<dbReference type="EC" id="2.7.7.68" evidence="1"/>
<dbReference type="EMBL" id="CP002009">
    <property type="protein sequence ID" value="ADG13675.1"/>
    <property type="molecule type" value="Genomic_DNA"/>
</dbReference>
<dbReference type="RefSeq" id="WP_013100420.1">
    <property type="nucleotide sequence ID" value="NC_014122.1"/>
</dbReference>
<dbReference type="SMR" id="D5VSX2"/>
<dbReference type="STRING" id="573063.Metin_1017"/>
<dbReference type="GeneID" id="9132034"/>
<dbReference type="KEGG" id="mif:Metin_1017"/>
<dbReference type="eggNOG" id="arCOG04472">
    <property type="taxonomic scope" value="Archaea"/>
</dbReference>
<dbReference type="HOGENOM" id="CLU_076569_2_0_2"/>
<dbReference type="OrthoDB" id="11179at2157"/>
<dbReference type="UniPathway" id="UPA00071"/>
<dbReference type="Proteomes" id="UP000002061">
    <property type="component" value="Chromosome"/>
</dbReference>
<dbReference type="GO" id="GO:0005525">
    <property type="term" value="F:GTP binding"/>
    <property type="evidence" value="ECO:0007669"/>
    <property type="project" value="UniProtKB-KW"/>
</dbReference>
<dbReference type="GO" id="GO:0043814">
    <property type="term" value="F:phospholactate guanylyltransferase activity"/>
    <property type="evidence" value="ECO:0007669"/>
    <property type="project" value="UniProtKB-EC"/>
</dbReference>
<dbReference type="GO" id="GO:0052645">
    <property type="term" value="P:F420-0 metabolic process"/>
    <property type="evidence" value="ECO:0007669"/>
    <property type="project" value="UniProtKB-UniRule"/>
</dbReference>
<dbReference type="Gene3D" id="3.90.550.10">
    <property type="entry name" value="Spore Coat Polysaccharide Biosynthesis Protein SpsA, Chain A"/>
    <property type="match status" value="1"/>
</dbReference>
<dbReference type="HAMAP" id="MF_02114">
    <property type="entry name" value="CofC"/>
    <property type="match status" value="1"/>
</dbReference>
<dbReference type="InterPro" id="IPR002835">
    <property type="entry name" value="CofC"/>
</dbReference>
<dbReference type="InterPro" id="IPR029044">
    <property type="entry name" value="Nucleotide-diphossugar_trans"/>
</dbReference>
<dbReference type="NCBIfam" id="TIGR03552">
    <property type="entry name" value="F420_cofC"/>
    <property type="match status" value="1"/>
</dbReference>
<dbReference type="PANTHER" id="PTHR40392">
    <property type="entry name" value="2-PHOSPHO-L-LACTATE GUANYLYLTRANSFERASE"/>
    <property type="match status" value="1"/>
</dbReference>
<dbReference type="PANTHER" id="PTHR40392:SF1">
    <property type="entry name" value="2-PHOSPHO-L-LACTATE GUANYLYLTRANSFERASE"/>
    <property type="match status" value="1"/>
</dbReference>
<dbReference type="Pfam" id="PF01983">
    <property type="entry name" value="CofC"/>
    <property type="match status" value="1"/>
</dbReference>
<dbReference type="SUPFAM" id="SSF53448">
    <property type="entry name" value="Nucleotide-diphospho-sugar transferases"/>
    <property type="match status" value="1"/>
</dbReference>
<sequence length="216" mass="24851">MNTIIPISPINNLKTRLSEFLTLEERKNLLFNMLRDIFKALKGLNIYAISKDPEILEFCNNLGAKTIEEKGKGLNQALNQAFSVVNEDLLIVPADIPLIRESHIKEIKKLKEEFEAIIAPSRGGGTNLLYLSRASLINLRYEGFSFLKHLEEFKRNKVSYYIYDSFYLSIDINTPEDLGEIFIHGDGSYTKRYLESLNIKVEPKHSSAGRFKIYRE</sequence>
<evidence type="ECO:0000255" key="1">
    <source>
        <dbReference type="HAMAP-Rule" id="MF_02114"/>
    </source>
</evidence>
<gene>
    <name evidence="1" type="primary">cofC</name>
    <name type="ordered locus">Metin_1017</name>
</gene>
<feature type="chain" id="PRO_0000398738" description="2-phospho-L-lactate guanylyltransferase">
    <location>
        <begin position="1"/>
        <end position="216"/>
    </location>
</feature>
<organism>
    <name type="scientific">Methanocaldococcus infernus (strain DSM 11812 / JCM 15783 / ME)</name>
    <dbReference type="NCBI Taxonomy" id="573063"/>
    <lineage>
        <taxon>Archaea</taxon>
        <taxon>Methanobacteriati</taxon>
        <taxon>Methanobacteriota</taxon>
        <taxon>Methanomada group</taxon>
        <taxon>Methanococci</taxon>
        <taxon>Methanococcales</taxon>
        <taxon>Methanocaldococcaceae</taxon>
        <taxon>Methanocaldococcus</taxon>
    </lineage>
</organism>
<reference key="1">
    <citation type="submission" date="2010-04" db="EMBL/GenBank/DDBJ databases">
        <title>Complete sequence of Methanocaldococcus infernus ME.</title>
        <authorList>
            <consortium name="US DOE Joint Genome Institute"/>
            <person name="Lucas S."/>
            <person name="Copeland A."/>
            <person name="Lapidus A."/>
            <person name="Cheng J.-F."/>
            <person name="Bruce D."/>
            <person name="Goodwin L."/>
            <person name="Pitluck S."/>
            <person name="Munk A.C."/>
            <person name="Detter J.C."/>
            <person name="Han C."/>
            <person name="Tapia R."/>
            <person name="Land M."/>
            <person name="Hauser L."/>
            <person name="Kyrpides N."/>
            <person name="Mikhailova N."/>
            <person name="Sieprawska-Lupa M."/>
            <person name="Whitman W.B."/>
            <person name="Woyke T."/>
        </authorList>
    </citation>
    <scope>NUCLEOTIDE SEQUENCE [LARGE SCALE GENOMIC DNA]</scope>
    <source>
        <strain>DSM 11812 / JCM 15783 / ME</strain>
    </source>
</reference>
<comment type="function">
    <text evidence="1">Guanylyltransferase that catalyzes the activation of (2S)-2-phospholactate (2-PL) as (2S)-lactyl-2-diphospho-5'-guanosine, via the condensation of 2-PL with GTP. It is involved in the biosynthesis of coenzyme F420, a hydride carrier cofactor.</text>
</comment>
<comment type="catalytic activity">
    <reaction evidence="1">
        <text>(2S)-2-phospholactate + GTP + H(+) = (2S)-lactyl-2-diphospho-5'-guanosine + diphosphate</text>
        <dbReference type="Rhea" id="RHEA:63424"/>
        <dbReference type="ChEBI" id="CHEBI:15378"/>
        <dbReference type="ChEBI" id="CHEBI:33019"/>
        <dbReference type="ChEBI" id="CHEBI:37565"/>
        <dbReference type="ChEBI" id="CHEBI:59435"/>
        <dbReference type="ChEBI" id="CHEBI:59906"/>
        <dbReference type="EC" id="2.7.7.68"/>
    </reaction>
</comment>
<comment type="pathway">
    <text evidence="1">Cofactor biosynthesis; coenzyme F420 biosynthesis.</text>
</comment>
<comment type="subunit">
    <text evidence="1">Homodimer.</text>
</comment>
<comment type="similarity">
    <text evidence="1">Belongs to the CofC family.</text>
</comment>
<name>COFC_METIM</name>
<proteinExistence type="inferred from homology"/>